<reference key="1">
    <citation type="submission" date="2007-06" db="EMBL/GenBank/DDBJ databases">
        <title>Complete sequence of Methanococcus vannielii SB.</title>
        <authorList>
            <consortium name="US DOE Joint Genome Institute"/>
            <person name="Copeland A."/>
            <person name="Lucas S."/>
            <person name="Lapidus A."/>
            <person name="Barry K."/>
            <person name="Glavina del Rio T."/>
            <person name="Dalin E."/>
            <person name="Tice H."/>
            <person name="Pitluck S."/>
            <person name="Chain P."/>
            <person name="Malfatti S."/>
            <person name="Shin M."/>
            <person name="Vergez L."/>
            <person name="Schmutz J."/>
            <person name="Larimer F."/>
            <person name="Land M."/>
            <person name="Hauser L."/>
            <person name="Kyrpides N."/>
            <person name="Anderson I."/>
            <person name="Sieprawska-Lupa M."/>
            <person name="Whitman W.B."/>
            <person name="Richardson P."/>
        </authorList>
    </citation>
    <scope>NUCLEOTIDE SEQUENCE [LARGE SCALE GENOMIC DNA]</scope>
    <source>
        <strain>ATCC 35089 / DSM 1224 / JCM 13029 / OCM 148 / SB</strain>
    </source>
</reference>
<accession>A6UPN5</accession>
<dbReference type="EMBL" id="CP000742">
    <property type="protein sequence ID" value="ABR54457.1"/>
    <property type="molecule type" value="Genomic_DNA"/>
</dbReference>
<dbReference type="RefSeq" id="WP_011972360.1">
    <property type="nucleotide sequence ID" value="NC_009634.1"/>
</dbReference>
<dbReference type="SMR" id="A6UPN5"/>
<dbReference type="STRING" id="406327.Mevan_0550"/>
<dbReference type="GeneID" id="5325977"/>
<dbReference type="KEGG" id="mvn:Mevan_0550"/>
<dbReference type="eggNOG" id="arCOG04376">
    <property type="taxonomic scope" value="Archaea"/>
</dbReference>
<dbReference type="HOGENOM" id="CLU_074757_0_0_2"/>
<dbReference type="OrthoDB" id="50299at2157"/>
<dbReference type="Proteomes" id="UP000001107">
    <property type="component" value="Chromosome"/>
</dbReference>
<dbReference type="Gene3D" id="3.10.520.10">
    <property type="entry name" value="ApbE-like domains"/>
    <property type="match status" value="1"/>
</dbReference>
<dbReference type="HAMAP" id="MF_01079">
    <property type="entry name" value="UPF0280"/>
    <property type="match status" value="1"/>
</dbReference>
<dbReference type="InterPro" id="IPR003374">
    <property type="entry name" value="ApbE-like_sf"/>
</dbReference>
<dbReference type="InterPro" id="IPR037456">
    <property type="entry name" value="MA1715-like"/>
</dbReference>
<dbReference type="InterPro" id="IPR007183">
    <property type="entry name" value="UPF0280"/>
</dbReference>
<dbReference type="NCBIfam" id="NF003321">
    <property type="entry name" value="PRK04334.1-1"/>
    <property type="match status" value="1"/>
</dbReference>
<dbReference type="PIRSF" id="PIRSF006421">
    <property type="entry name" value="UCP006421"/>
    <property type="match status" value="1"/>
</dbReference>
<dbReference type="SUPFAM" id="SSF143631">
    <property type="entry name" value="ApbE-like"/>
    <property type="match status" value="1"/>
</dbReference>
<comment type="similarity">
    <text evidence="1">Belongs to the UPF0280 family.</text>
</comment>
<proteinExistence type="inferred from homology"/>
<evidence type="ECO:0000255" key="1">
    <source>
        <dbReference type="HAMAP-Rule" id="MF_01079"/>
    </source>
</evidence>
<organism>
    <name type="scientific">Methanococcus vannielii (strain ATCC 35089 / DSM 1224 / JCM 13029 / OCM 148 / SB)</name>
    <dbReference type="NCBI Taxonomy" id="406327"/>
    <lineage>
        <taxon>Archaea</taxon>
        <taxon>Methanobacteriati</taxon>
        <taxon>Methanobacteriota</taxon>
        <taxon>Methanomada group</taxon>
        <taxon>Methanococci</taxon>
        <taxon>Methanococcales</taxon>
        <taxon>Methanococcaceae</taxon>
        <taxon>Methanococcus</taxon>
    </lineage>
</organism>
<protein>
    <recommendedName>
        <fullName evidence="1">UPF0280 protein Mevan_0550</fullName>
    </recommendedName>
</protein>
<name>Y550_METVS</name>
<sequence length="247" mass="26455">MELFSEKISIKETNVLLKVDNPKLFKIAKKKIIDERLNLEKYISKNPVFLTTYSPFKISNDAPEIVKLMANSSENANVGPMAAVAGTFSELVIHSLLENNSKSAICENGGDIALSSDFDIIVGLYAGNSPISGNLGFKLKKEKIKNGYGVCTSSGTVGHSVSFGNADSVTVFAKSASIADAAATSIGNFAVGSPDEAINKCLEQAENILKIDGVFVTFQEYAGKVGKIPTLIRTEKKEAFGNVFEMV</sequence>
<feature type="chain" id="PRO_0000366706" description="UPF0280 protein Mevan_0550">
    <location>
        <begin position="1"/>
        <end position="247"/>
    </location>
</feature>
<gene>
    <name type="ordered locus">Mevan_0550</name>
</gene>